<reference key="1">
    <citation type="journal article" date="2013" name="Appl. Environ. Microbiol.">
        <title>The genome of the alga-associated marine flavobacterium Formosa agariphila KMM 3901T reveals a broad potential for degradation of algal polysaccharides.</title>
        <authorList>
            <person name="Mann A.J."/>
            <person name="Hahnke R.L."/>
            <person name="Huang S."/>
            <person name="Werner J."/>
            <person name="Xing P."/>
            <person name="Barbeyron T."/>
            <person name="Huettel B."/>
            <person name="Stueber K."/>
            <person name="Reinhardt R."/>
            <person name="Harder J."/>
            <person name="Gloeckner F.O."/>
            <person name="Amann R.I."/>
            <person name="Teeling H."/>
        </authorList>
    </citation>
    <scope>NUCLEOTIDE SEQUENCE [LARGE SCALE GENOMIC DNA]</scope>
    <source>
        <strain>DSM 15362 / KCTC 12365 / LMG 23005 / KMM 3901 / M-2Alg 35-1</strain>
    </source>
</reference>
<reference key="2">
    <citation type="journal article" date="2019" name="Nat. Chem. Biol.">
        <title>A marine bacterial enzymatic cascade degrades the algal polysaccharide ulvan.</title>
        <authorList>
            <person name="Reisky L."/>
            <person name="Prechoux A."/>
            <person name="Zuehlke M.K."/>
            <person name="Baeumgen M."/>
            <person name="Robb C.S."/>
            <person name="Gerlach N."/>
            <person name="Roret T."/>
            <person name="Stanetty C."/>
            <person name="Larocque R."/>
            <person name="Michel G."/>
            <person name="Song T."/>
            <person name="Markert S."/>
            <person name="Unfried F."/>
            <person name="Mihovilovic M.D."/>
            <person name="Trautwein-Schult A."/>
            <person name="Becher D."/>
            <person name="Schweder T."/>
            <person name="Bornscheuer U.T."/>
            <person name="Hehemann J.H."/>
        </authorList>
    </citation>
    <scope>FUNCTION</scope>
    <scope>INDUCTION</scope>
</reference>
<feature type="chain" id="PRO_0000448299" description="Putative beta-glucuronidase">
    <location>
        <begin position="1"/>
        <end position="824"/>
    </location>
</feature>
<feature type="transmembrane region" description="Helical" evidence="2">
    <location>
        <begin position="26"/>
        <end position="43"/>
    </location>
</feature>
<feature type="active site" description="Proton donor" evidence="1">
    <location>
        <position position="430"/>
    </location>
</feature>
<protein>
    <recommendedName>
        <fullName evidence="5">Putative beta-glucuronidase</fullName>
        <ecNumber evidence="1">3.2.1.31</ecNumber>
    </recommendedName>
    <alternativeName>
        <fullName evidence="5">Glycosyl hydrolase 2 family protein P8</fullName>
        <shortName evidence="4">P8_GH2</shortName>
    </alternativeName>
    <alternativeName>
        <fullName evidence="4">Polysaccharide utilization locus H protein P8</fullName>
        <shortName>PUL H protein P8</shortName>
    </alternativeName>
</protein>
<name>PLH8_FORAG</name>
<evidence type="ECO:0000250" key="1">
    <source>
        <dbReference type="UniProtKB" id="P05804"/>
    </source>
</evidence>
<evidence type="ECO:0000255" key="2"/>
<evidence type="ECO:0000269" key="3">
    <source>
    </source>
</evidence>
<evidence type="ECO:0000303" key="4">
    <source>
    </source>
</evidence>
<evidence type="ECO:0000305" key="5"/>
<evidence type="ECO:0000305" key="6">
    <source>
    </source>
</evidence>
<gene>
    <name type="ORF">BN863_21970</name>
</gene>
<accession>T2KPJ7</accession>
<proteinExistence type="evidence at transcript level"/>
<organism>
    <name type="scientific">Formosa agariphila (strain DSM 15362 / KCTC 12365 / LMG 23005 / KMM 3901 / M-2Alg 35-1)</name>
    <dbReference type="NCBI Taxonomy" id="1347342"/>
    <lineage>
        <taxon>Bacteria</taxon>
        <taxon>Pseudomonadati</taxon>
        <taxon>Bacteroidota</taxon>
        <taxon>Flavobacteriia</taxon>
        <taxon>Flavobacteriales</taxon>
        <taxon>Flavobacteriaceae</taxon>
        <taxon>Formosa</taxon>
    </lineage>
</organism>
<keyword id="KW-0326">Glycosidase</keyword>
<keyword id="KW-0378">Hydrolase</keyword>
<keyword id="KW-0472">Membrane</keyword>
<keyword id="KW-1185">Reference proteome</keyword>
<keyword id="KW-0812">Transmembrane</keyword>
<keyword id="KW-1133">Transmembrane helix</keyword>
<sequence length="824" mass="93897">MGFCMKDSKQYYKSSIGKSLKRSNGYLKLVLVLYLIMVSWSGYSKEVFNSRTKENINANWLYLEKNIKDINLALNDANWESINLPHTWNALDATDLNPGYRRSGSWYKKELAISNIENNKLYQLYFEGVNINSEVYVNGQKAGGHIGGYIGFTIDITEFIKSGKNDIVIRVDNSYDPEVIPSQKSDFFIFGGITRDVWLETIPKQHLSELKITTPKVSENEAELLATVAINNLNNSNLKVQANLLDAQGVTVVSSVFKIKNNTAKIHFRNIKNPKLWDTEHPNLYTLKVALLEKGDVIDSVQNRVGFRWFEFKDHGAFYLNGKRVLLRGTHRHEEHAGVGAAMSNMQHRKDMELIKDMGANFVRLAHYPQDPEVYKACDELGLLIWDELPWCRGGLGNETWKTNTKNMLTEIINQNYNHPSIIIWSLGNEMYWLPDFENGDDTDKMNSFLTELNDLAHQLDPSRKTAIRKYYEGSHIVDVFSPSIWSGWYSGSYKSYQKAIDTYKKEYPHFLHAEYGGSSHVGRHTENPVTGEGKIQSDGWEEEIVQTDVANIAQIGDWSENYIVDLFDWHLRISENDENFVGNVQWAFKDFGTPLRPENAIPYMNQKGLVDRAGNPKDAFYVFKSYWSKEPFTYIESHTWTERQGPKDLARDISVYSNCPEVELFLNGKSLGVKKRDLKVFPAAGLNWNLNFKEGKNTLVAVGKTKENKTVKDELAINYRFTKNGKAVGLKLESELLENGNYLVTAIAYDKNGLRCLDYEDQVYFQCLSGGETLKSQGTPTGSESIAMANGKAAIEVKRDGKNIPVVMMVLNQNFKGTYLTIE</sequence>
<comment type="function">
    <text evidence="6">Glycoside hydrolase that may be involved in ulvan degradation (Probable). Ulvan is the main polysaccharide component of the Ulvales (green seaweed) cell wall. It is composed of disaccharide building blocks comprising 3-sulfated rhamnose (Rha3S) linked to D-glucuronic acid (GlcA), L-iduronic acid (IduA), or D-xylose (Xyl) (Probable).</text>
</comment>
<comment type="catalytic activity">
    <reaction evidence="1">
        <text>a beta-D-glucuronoside + H2O = D-glucuronate + an alcohol</text>
        <dbReference type="Rhea" id="RHEA:17633"/>
        <dbReference type="ChEBI" id="CHEBI:15377"/>
        <dbReference type="ChEBI" id="CHEBI:30879"/>
        <dbReference type="ChEBI" id="CHEBI:58720"/>
        <dbReference type="ChEBI" id="CHEBI:83411"/>
        <dbReference type="EC" id="3.2.1.31"/>
    </reaction>
</comment>
<comment type="subcellular location">
    <subcellularLocation>
        <location evidence="2">Membrane</location>
        <topology evidence="2">Single-pass membrane protein</topology>
    </subcellularLocation>
</comment>
<comment type="induction">
    <text evidence="3">By ulvan and rhamnose.</text>
</comment>
<comment type="similarity">
    <text evidence="5">Belongs to the glycosyl hydrolase 2 family.</text>
</comment>
<dbReference type="EC" id="3.2.1.31" evidence="1"/>
<dbReference type="EMBL" id="HG315671">
    <property type="protein sequence ID" value="CDF79909.1"/>
    <property type="molecule type" value="Genomic_DNA"/>
</dbReference>
<dbReference type="SMR" id="T2KPJ7"/>
<dbReference type="STRING" id="1347342.BN863_21970"/>
<dbReference type="PATRIC" id="fig|1347342.6.peg.2204"/>
<dbReference type="eggNOG" id="COG3250">
    <property type="taxonomic scope" value="Bacteria"/>
</dbReference>
<dbReference type="HOGENOM" id="CLU_006501_5_0_10"/>
<dbReference type="Proteomes" id="UP000016160">
    <property type="component" value="Chromosome"/>
</dbReference>
<dbReference type="GO" id="GO:0016020">
    <property type="term" value="C:membrane"/>
    <property type="evidence" value="ECO:0007669"/>
    <property type="project" value="UniProtKB-SubCell"/>
</dbReference>
<dbReference type="GO" id="GO:0004566">
    <property type="term" value="F:beta-glucuronidase activity"/>
    <property type="evidence" value="ECO:0007669"/>
    <property type="project" value="UniProtKB-EC"/>
</dbReference>
<dbReference type="GO" id="GO:0005975">
    <property type="term" value="P:carbohydrate metabolic process"/>
    <property type="evidence" value="ECO:0007669"/>
    <property type="project" value="InterPro"/>
</dbReference>
<dbReference type="Gene3D" id="2.60.120.260">
    <property type="entry name" value="Galactose-binding domain-like"/>
    <property type="match status" value="1"/>
</dbReference>
<dbReference type="Gene3D" id="3.20.20.80">
    <property type="entry name" value="Glycosidases"/>
    <property type="match status" value="1"/>
</dbReference>
<dbReference type="Gene3D" id="2.60.40.10">
    <property type="entry name" value="Immunoglobulins"/>
    <property type="match status" value="2"/>
</dbReference>
<dbReference type="InterPro" id="IPR036156">
    <property type="entry name" value="Beta-gal/glucu_dom_sf"/>
</dbReference>
<dbReference type="InterPro" id="IPR032311">
    <property type="entry name" value="DUF4982"/>
</dbReference>
<dbReference type="InterPro" id="IPR008979">
    <property type="entry name" value="Galactose-bd-like_sf"/>
</dbReference>
<dbReference type="InterPro" id="IPR051913">
    <property type="entry name" value="GH2_Domain-Containing"/>
</dbReference>
<dbReference type="InterPro" id="IPR006101">
    <property type="entry name" value="Glyco_hydro_2"/>
</dbReference>
<dbReference type="InterPro" id="IPR006103">
    <property type="entry name" value="Glyco_hydro_2_cat"/>
</dbReference>
<dbReference type="InterPro" id="IPR006102">
    <property type="entry name" value="Glyco_hydro_2_Ig-like"/>
</dbReference>
<dbReference type="InterPro" id="IPR006104">
    <property type="entry name" value="Glyco_hydro_2_N"/>
</dbReference>
<dbReference type="InterPro" id="IPR017853">
    <property type="entry name" value="Glycoside_hydrolase_SF"/>
</dbReference>
<dbReference type="InterPro" id="IPR013783">
    <property type="entry name" value="Ig-like_fold"/>
</dbReference>
<dbReference type="PANTHER" id="PTHR42732">
    <property type="entry name" value="BETA-GALACTOSIDASE"/>
    <property type="match status" value="1"/>
</dbReference>
<dbReference type="PANTHER" id="PTHR42732:SF1">
    <property type="entry name" value="BETA-MANNOSIDASE"/>
    <property type="match status" value="1"/>
</dbReference>
<dbReference type="Pfam" id="PF16355">
    <property type="entry name" value="DUF4982"/>
    <property type="match status" value="1"/>
</dbReference>
<dbReference type="Pfam" id="PF00703">
    <property type="entry name" value="Glyco_hydro_2"/>
    <property type="match status" value="1"/>
</dbReference>
<dbReference type="Pfam" id="PF02836">
    <property type="entry name" value="Glyco_hydro_2_C"/>
    <property type="match status" value="1"/>
</dbReference>
<dbReference type="Pfam" id="PF02837">
    <property type="entry name" value="Glyco_hydro_2_N"/>
    <property type="match status" value="1"/>
</dbReference>
<dbReference type="PRINTS" id="PR00132">
    <property type="entry name" value="GLHYDRLASE2"/>
</dbReference>
<dbReference type="SUPFAM" id="SSF51445">
    <property type="entry name" value="(Trans)glycosidases"/>
    <property type="match status" value="1"/>
</dbReference>
<dbReference type="SUPFAM" id="SSF49303">
    <property type="entry name" value="beta-Galactosidase/glucuronidase domain"/>
    <property type="match status" value="1"/>
</dbReference>
<dbReference type="SUPFAM" id="SSF49785">
    <property type="entry name" value="Galactose-binding domain-like"/>
    <property type="match status" value="1"/>
</dbReference>